<feature type="chain" id="PRO_0000409138" description="Flavonol 7-O-rhamnosyltransferase">
    <location>
        <begin position="1"/>
        <end position="435"/>
    </location>
</feature>
<feature type="active site" description="Proton acceptor" evidence="1">
    <location>
        <position position="21"/>
    </location>
</feature>
<feature type="active site" description="Charge relay" evidence="1">
    <location>
        <position position="119"/>
    </location>
</feature>
<feature type="binding site" evidence="7 12">
    <location>
        <position position="18"/>
    </location>
    <ligand>
        <name>UDP</name>
        <dbReference type="ChEBI" id="CHEBI:58223"/>
    </ligand>
</feature>
<feature type="binding site" evidence="7 13">
    <location>
        <position position="18"/>
    </location>
    <ligand>
        <name>UDP-beta-L-rhamnose</name>
        <dbReference type="ChEBI" id="CHEBI:83836"/>
    </ligand>
</feature>
<feature type="binding site" evidence="7 14">
    <location>
        <position position="21"/>
    </location>
    <ligand>
        <name>quercetin</name>
        <dbReference type="ChEBI" id="CHEBI:57694"/>
    </ligand>
</feature>
<feature type="binding site" evidence="7 12">
    <location>
        <position position="250"/>
    </location>
    <ligand>
        <name>UDP</name>
        <dbReference type="ChEBI" id="CHEBI:58223"/>
    </ligand>
</feature>
<feature type="binding site" evidence="7 13">
    <location>
        <position position="250"/>
    </location>
    <ligand>
        <name>UDP-beta-L-rhamnose</name>
        <dbReference type="ChEBI" id="CHEBI:83836"/>
    </ligand>
</feature>
<feature type="binding site" evidence="7 12">
    <location>
        <position position="315"/>
    </location>
    <ligand>
        <name>UDP</name>
        <dbReference type="ChEBI" id="CHEBI:58223"/>
    </ligand>
</feature>
<feature type="binding site" evidence="7 13">
    <location>
        <position position="315"/>
    </location>
    <ligand>
        <name>UDP-beta-L-rhamnose</name>
        <dbReference type="ChEBI" id="CHEBI:83836"/>
    </ligand>
</feature>
<feature type="binding site" evidence="7 12">
    <location>
        <position position="332"/>
    </location>
    <ligand>
        <name>UDP</name>
        <dbReference type="ChEBI" id="CHEBI:58223"/>
    </ligand>
</feature>
<feature type="binding site" evidence="7 13">
    <location>
        <position position="332"/>
    </location>
    <ligand>
        <name>UDP-beta-L-rhamnose</name>
        <dbReference type="ChEBI" id="CHEBI:83836"/>
    </ligand>
</feature>
<feature type="binding site" evidence="7 12">
    <location>
        <position position="336"/>
    </location>
    <ligand>
        <name>UDP</name>
        <dbReference type="ChEBI" id="CHEBI:58223"/>
    </ligand>
</feature>
<feature type="binding site" evidence="7 13">
    <location>
        <position position="336"/>
    </location>
    <ligand>
        <name>UDP-beta-L-rhamnose</name>
        <dbReference type="ChEBI" id="CHEBI:83836"/>
    </ligand>
</feature>
<feature type="binding site" evidence="7 12">
    <location>
        <position position="337"/>
    </location>
    <ligand>
        <name>UDP</name>
        <dbReference type="ChEBI" id="CHEBI:58223"/>
    </ligand>
</feature>
<feature type="binding site" evidence="7 13">
    <location>
        <position position="337"/>
    </location>
    <ligand>
        <name>UDP-beta-L-rhamnose</name>
        <dbReference type="ChEBI" id="CHEBI:83836"/>
    </ligand>
</feature>
<feature type="binding site" evidence="7 12">
    <location>
        <position position="340"/>
    </location>
    <ligand>
        <name>UDP</name>
        <dbReference type="ChEBI" id="CHEBI:58223"/>
    </ligand>
</feature>
<feature type="binding site" evidence="7 13">
    <location>
        <position position="340"/>
    </location>
    <ligand>
        <name>UDP-beta-L-rhamnose</name>
        <dbReference type="ChEBI" id="CHEBI:83836"/>
    </ligand>
</feature>
<feature type="mutagenesis site" description="Slight decrease in catalytic activity." evidence="7">
    <original>Q</original>
    <variation>G</variation>
    <location>
        <position position="18"/>
    </location>
</feature>
<feature type="mutagenesis site" description="Almost complete loss of catalytic activity." evidence="7">
    <original>H</original>
    <variation>A</variation>
    <location>
        <position position="21"/>
    </location>
</feature>
<feature type="mutagenesis site" description="Reduces catalytic activity 5.4-fold." evidence="7">
    <original>H</original>
    <variation>N</variation>
    <location>
        <position position="21"/>
    </location>
</feature>
<feature type="mutagenesis site" description="Reduces catalytic activity 1.6-fold." evidence="7">
    <original>L</original>
    <variation>A</variation>
    <variation>G</variation>
    <variation>S</variation>
    <location>
        <position position="88"/>
    </location>
</feature>
<feature type="mutagenesis site" description="No effect on catalytic activity." evidence="7">
    <original>S</original>
    <variation>A</variation>
    <location>
        <position position="124"/>
    </location>
</feature>
<feature type="mutagenesis site" description="Slight decrease in catalytic activity." evidence="7">
    <original>S</original>
    <variation>D</variation>
    <location>
        <position position="124"/>
    </location>
</feature>
<feature type="mutagenesis site" description="Slight decrease in catalytic activity." evidence="7">
    <original>P</original>
    <variation>A</variation>
    <location>
        <position position="147"/>
    </location>
</feature>
<feature type="mutagenesis site" description="Complete loss of catalytic activity." evidence="7">
    <original>P</original>
    <variation>T</variation>
    <location>
        <position position="147"/>
    </location>
</feature>
<feature type="mutagenesis site" description="Reduces catalytic activity 4.3-fold.">
    <original>I</original>
    <variation>A</variation>
    <variation>S</variation>
    <location>
        <position position="148"/>
    </location>
</feature>
<feature type="mutagenesis site" description="Slight decrease in catalytic activity." evidence="7">
    <original>S</original>
    <variation>A</variation>
    <location>
        <position position="163"/>
    </location>
</feature>
<feature type="mutagenesis site" description="Reduces catalytic activity 6.5-fold." evidence="7">
    <original>W</original>
    <variation>A</variation>
    <location>
        <position position="335"/>
    </location>
</feature>
<feature type="mutagenesis site" description="Slight decrease in catalytic activity." evidence="7">
    <original>G</original>
    <variation>N</variation>
    <location>
        <position position="336"/>
    </location>
</feature>
<feature type="mutagenesis site" description="Reduces catalytic activity 2.2-fold.">
    <original>Q</original>
    <variation>A</variation>
    <location>
        <position position="354"/>
    </location>
</feature>
<feature type="mutagenesis site" description="Complete loss of catalytic activity." evidence="7">
    <original>D</original>
    <variation>A</variation>
    <location>
        <position position="356"/>
    </location>
</feature>
<feature type="mutagenesis site" description="No effect on catalytic activity." evidence="7">
    <original>H</original>
    <variation>A</variation>
    <variation>Q</variation>
    <location>
        <position position="357"/>
    </location>
</feature>
<feature type="sequence conflict" description="In Ref. 4; BAE98508." evidence="9" ref="4">
    <original>A</original>
    <variation>D</variation>
    <location>
        <position position="97"/>
    </location>
</feature>
<feature type="sequence conflict" description="In Ref. 5; AAM60911." evidence="9" ref="5">
    <original>S</original>
    <variation>G</variation>
    <location>
        <position position="270"/>
    </location>
</feature>
<feature type="strand" evidence="15">
    <location>
        <begin position="10"/>
        <end position="14"/>
    </location>
</feature>
<feature type="helix" evidence="15">
    <location>
        <begin position="19"/>
        <end position="34"/>
    </location>
</feature>
<feature type="strand" evidence="15">
    <location>
        <begin position="38"/>
        <end position="43"/>
    </location>
</feature>
<feature type="helix" evidence="15">
    <location>
        <begin position="45"/>
        <end position="51"/>
    </location>
</feature>
<feature type="helix" evidence="15">
    <location>
        <begin position="52"/>
        <end position="57"/>
    </location>
</feature>
<feature type="turn" evidence="15">
    <location>
        <begin position="60"/>
        <end position="62"/>
    </location>
</feature>
<feature type="strand" evidence="15">
    <location>
        <begin position="63"/>
        <end position="67"/>
    </location>
</feature>
<feature type="helix" evidence="15">
    <location>
        <begin position="83"/>
        <end position="85"/>
    </location>
</feature>
<feature type="helix" evidence="15">
    <location>
        <begin position="88"/>
        <end position="90"/>
    </location>
</feature>
<feature type="helix" evidence="15">
    <location>
        <begin position="91"/>
        <end position="99"/>
    </location>
</feature>
<feature type="helix" evidence="15">
    <location>
        <begin position="102"/>
        <end position="111"/>
    </location>
</feature>
<feature type="helix" evidence="15">
    <location>
        <begin position="114"/>
        <end position="116"/>
    </location>
</feature>
<feature type="strand" evidence="15">
    <location>
        <begin position="119"/>
        <end position="124"/>
    </location>
</feature>
<feature type="helix" evidence="15">
    <location>
        <begin position="125"/>
        <end position="127"/>
    </location>
</feature>
<feature type="helix" evidence="15">
    <location>
        <begin position="128"/>
        <end position="138"/>
    </location>
</feature>
<feature type="strand" evidence="15">
    <location>
        <begin position="141"/>
        <end position="148"/>
    </location>
</feature>
<feature type="helix" evidence="15">
    <location>
        <begin position="150"/>
        <end position="157"/>
    </location>
</feature>
<feature type="helix" evidence="15">
    <location>
        <begin position="163"/>
        <end position="165"/>
    </location>
</feature>
<feature type="helix" evidence="15">
    <location>
        <begin position="166"/>
        <end position="174"/>
    </location>
</feature>
<feature type="strand" evidence="15">
    <location>
        <begin position="175"/>
        <end position="182"/>
    </location>
</feature>
<feature type="helix" evidence="15">
    <location>
        <begin position="184"/>
        <end position="186"/>
    </location>
</feature>
<feature type="helix" evidence="15">
    <location>
        <begin position="188"/>
        <end position="197"/>
    </location>
</feature>
<feature type="strand" evidence="15">
    <location>
        <begin position="204"/>
        <end position="206"/>
    </location>
</feature>
<feature type="helix" evidence="15">
    <location>
        <begin position="227"/>
        <end position="236"/>
    </location>
</feature>
<feature type="strand" evidence="15">
    <location>
        <begin position="239"/>
        <end position="241"/>
    </location>
</feature>
<feature type="strand" evidence="15">
    <location>
        <begin position="243"/>
        <end position="247"/>
    </location>
</feature>
<feature type="turn" evidence="16">
    <location>
        <begin position="249"/>
        <end position="251"/>
    </location>
</feature>
<feature type="helix" evidence="15">
    <location>
        <begin position="256"/>
        <end position="269"/>
    </location>
</feature>
<feature type="strand" evidence="15">
    <location>
        <begin position="272"/>
        <end position="277"/>
    </location>
</feature>
<feature type="turn" evidence="15">
    <location>
        <begin position="301"/>
        <end position="304"/>
    </location>
</feature>
<feature type="strand" evidence="17">
    <location>
        <begin position="305"/>
        <end position="307"/>
    </location>
</feature>
<feature type="strand" evidence="15">
    <location>
        <begin position="308"/>
        <end position="313"/>
    </location>
</feature>
<feature type="helix" evidence="15">
    <location>
        <begin position="317"/>
        <end position="321"/>
    </location>
</feature>
<feature type="strand" evidence="15">
    <location>
        <begin position="326"/>
        <end position="331"/>
    </location>
</feature>
<feature type="helix" evidence="15">
    <location>
        <begin position="335"/>
        <end position="344"/>
    </location>
</feature>
<feature type="strand" evidence="15">
    <location>
        <begin position="347"/>
        <end position="350"/>
    </location>
</feature>
<feature type="helix" evidence="15">
    <location>
        <begin position="355"/>
        <end position="364"/>
    </location>
</feature>
<feature type="turn" evidence="15">
    <location>
        <begin position="365"/>
        <end position="368"/>
    </location>
</feature>
<feature type="strand" evidence="15">
    <location>
        <begin position="371"/>
        <end position="373"/>
    </location>
</feature>
<feature type="helix" evidence="15">
    <location>
        <begin position="384"/>
        <end position="392"/>
    </location>
</feature>
<feature type="turn" evidence="15">
    <location>
        <begin position="393"/>
        <end position="395"/>
    </location>
</feature>
<feature type="helix" evidence="15">
    <location>
        <begin position="400"/>
        <end position="416"/>
    </location>
</feature>
<feature type="strand" evidence="16">
    <location>
        <begin position="417"/>
        <end position="420"/>
    </location>
</feature>
<feature type="helix" evidence="15">
    <location>
        <begin position="421"/>
        <end position="433"/>
    </location>
</feature>
<organism>
    <name type="scientific">Arabidopsis thaliana</name>
    <name type="common">Mouse-ear cress</name>
    <dbReference type="NCBI Taxonomy" id="3702"/>
    <lineage>
        <taxon>Eukaryota</taxon>
        <taxon>Viridiplantae</taxon>
        <taxon>Streptophyta</taxon>
        <taxon>Embryophyta</taxon>
        <taxon>Tracheophyta</taxon>
        <taxon>Spermatophyta</taxon>
        <taxon>Magnoliopsida</taxon>
        <taxon>eudicotyledons</taxon>
        <taxon>Gunneridae</taxon>
        <taxon>Pentapetalae</taxon>
        <taxon>rosids</taxon>
        <taxon>malvids</taxon>
        <taxon>Brassicales</taxon>
        <taxon>Brassicaceae</taxon>
        <taxon>Camelineae</taxon>
        <taxon>Arabidopsis</taxon>
    </lineage>
</organism>
<keyword id="KW-0002">3D-structure</keyword>
<keyword id="KW-0328">Glycosyltransferase</keyword>
<keyword id="KW-1185">Reference proteome</keyword>
<keyword id="KW-0808">Transferase</keyword>
<reference key="1">
    <citation type="journal article" date="2000" name="Nature">
        <title>Sequence and analysis of chromosome 1 of the plant Arabidopsis thaliana.</title>
        <authorList>
            <person name="Theologis A."/>
            <person name="Ecker J.R."/>
            <person name="Palm C.J."/>
            <person name="Federspiel N.A."/>
            <person name="Kaul S."/>
            <person name="White O."/>
            <person name="Alonso J."/>
            <person name="Altafi H."/>
            <person name="Araujo R."/>
            <person name="Bowman C.L."/>
            <person name="Brooks S.Y."/>
            <person name="Buehler E."/>
            <person name="Chan A."/>
            <person name="Chao Q."/>
            <person name="Chen H."/>
            <person name="Cheuk R.F."/>
            <person name="Chin C.W."/>
            <person name="Chung M.K."/>
            <person name="Conn L."/>
            <person name="Conway A.B."/>
            <person name="Conway A.R."/>
            <person name="Creasy T.H."/>
            <person name="Dewar K."/>
            <person name="Dunn P."/>
            <person name="Etgu P."/>
            <person name="Feldblyum T.V."/>
            <person name="Feng J.-D."/>
            <person name="Fong B."/>
            <person name="Fujii C.Y."/>
            <person name="Gill J.E."/>
            <person name="Goldsmith A.D."/>
            <person name="Haas B."/>
            <person name="Hansen N.F."/>
            <person name="Hughes B."/>
            <person name="Huizar L."/>
            <person name="Hunter J.L."/>
            <person name="Jenkins J."/>
            <person name="Johnson-Hopson C."/>
            <person name="Khan S."/>
            <person name="Khaykin E."/>
            <person name="Kim C.J."/>
            <person name="Koo H.L."/>
            <person name="Kremenetskaia I."/>
            <person name="Kurtz D.B."/>
            <person name="Kwan A."/>
            <person name="Lam B."/>
            <person name="Langin-Hooper S."/>
            <person name="Lee A."/>
            <person name="Lee J.M."/>
            <person name="Lenz C.A."/>
            <person name="Li J.H."/>
            <person name="Li Y.-P."/>
            <person name="Lin X."/>
            <person name="Liu S.X."/>
            <person name="Liu Z.A."/>
            <person name="Luros J.S."/>
            <person name="Maiti R."/>
            <person name="Marziali A."/>
            <person name="Militscher J."/>
            <person name="Miranda M."/>
            <person name="Nguyen M."/>
            <person name="Nierman W.C."/>
            <person name="Osborne B.I."/>
            <person name="Pai G."/>
            <person name="Peterson J."/>
            <person name="Pham P.K."/>
            <person name="Rizzo M."/>
            <person name="Rooney T."/>
            <person name="Rowley D."/>
            <person name="Sakano H."/>
            <person name="Salzberg S.L."/>
            <person name="Schwartz J.R."/>
            <person name="Shinn P."/>
            <person name="Southwick A.M."/>
            <person name="Sun H."/>
            <person name="Tallon L.J."/>
            <person name="Tambunga G."/>
            <person name="Toriumi M.J."/>
            <person name="Town C.D."/>
            <person name="Utterback T."/>
            <person name="Van Aken S."/>
            <person name="Vaysberg M."/>
            <person name="Vysotskaia V.S."/>
            <person name="Walker M."/>
            <person name="Wu D."/>
            <person name="Yu G."/>
            <person name="Fraser C.M."/>
            <person name="Venter J.C."/>
            <person name="Davis R.W."/>
        </authorList>
    </citation>
    <scope>NUCLEOTIDE SEQUENCE [LARGE SCALE GENOMIC DNA]</scope>
    <source>
        <strain>cv. Columbia</strain>
    </source>
</reference>
<reference key="2">
    <citation type="journal article" date="2017" name="Plant J.">
        <title>Araport11: a complete reannotation of the Arabidopsis thaliana reference genome.</title>
        <authorList>
            <person name="Cheng C.Y."/>
            <person name="Krishnakumar V."/>
            <person name="Chan A.P."/>
            <person name="Thibaud-Nissen F."/>
            <person name="Schobel S."/>
            <person name="Town C.D."/>
        </authorList>
    </citation>
    <scope>GENOME REANNOTATION</scope>
    <source>
        <strain>cv. Columbia</strain>
    </source>
</reference>
<reference key="3">
    <citation type="journal article" date="2003" name="Science">
        <title>Empirical analysis of transcriptional activity in the Arabidopsis genome.</title>
        <authorList>
            <person name="Yamada K."/>
            <person name="Lim J."/>
            <person name="Dale J.M."/>
            <person name="Chen H."/>
            <person name="Shinn P."/>
            <person name="Palm C.J."/>
            <person name="Southwick A.M."/>
            <person name="Wu H.C."/>
            <person name="Kim C.J."/>
            <person name="Nguyen M."/>
            <person name="Pham P.K."/>
            <person name="Cheuk R.F."/>
            <person name="Karlin-Newmann G."/>
            <person name="Liu S.X."/>
            <person name="Lam B."/>
            <person name="Sakano H."/>
            <person name="Wu T."/>
            <person name="Yu G."/>
            <person name="Miranda M."/>
            <person name="Quach H.L."/>
            <person name="Tripp M."/>
            <person name="Chang C.H."/>
            <person name="Lee J.M."/>
            <person name="Toriumi M.J."/>
            <person name="Chan M.M."/>
            <person name="Tang C.C."/>
            <person name="Onodera C.S."/>
            <person name="Deng J.M."/>
            <person name="Akiyama K."/>
            <person name="Ansari Y."/>
            <person name="Arakawa T."/>
            <person name="Banh J."/>
            <person name="Banno F."/>
            <person name="Bowser L."/>
            <person name="Brooks S.Y."/>
            <person name="Carninci P."/>
            <person name="Chao Q."/>
            <person name="Choy N."/>
            <person name="Enju A."/>
            <person name="Goldsmith A.D."/>
            <person name="Gurjal M."/>
            <person name="Hansen N.F."/>
            <person name="Hayashizaki Y."/>
            <person name="Johnson-Hopson C."/>
            <person name="Hsuan V.W."/>
            <person name="Iida K."/>
            <person name="Karnes M."/>
            <person name="Khan S."/>
            <person name="Koesema E."/>
            <person name="Ishida J."/>
            <person name="Jiang P.X."/>
            <person name="Jones T."/>
            <person name="Kawai J."/>
            <person name="Kamiya A."/>
            <person name="Meyers C."/>
            <person name="Nakajima M."/>
            <person name="Narusaka M."/>
            <person name="Seki M."/>
            <person name="Sakurai T."/>
            <person name="Satou M."/>
            <person name="Tamse R."/>
            <person name="Vaysberg M."/>
            <person name="Wallender E.K."/>
            <person name="Wong C."/>
            <person name="Yamamura Y."/>
            <person name="Yuan S."/>
            <person name="Shinozaki K."/>
            <person name="Davis R.W."/>
            <person name="Theologis A."/>
            <person name="Ecker J.R."/>
        </authorList>
    </citation>
    <scope>NUCLEOTIDE SEQUENCE [LARGE SCALE MRNA]</scope>
    <source>
        <strain>cv. Columbia</strain>
    </source>
</reference>
<reference key="4">
    <citation type="submission" date="2006-07" db="EMBL/GenBank/DDBJ databases">
        <title>Large-scale analysis of RIKEN Arabidopsis full-length (RAFL) cDNAs.</title>
        <authorList>
            <person name="Totoki Y."/>
            <person name="Seki M."/>
            <person name="Ishida J."/>
            <person name="Nakajima M."/>
            <person name="Enju A."/>
            <person name="Kamiya A."/>
            <person name="Narusaka M."/>
            <person name="Shin-i T."/>
            <person name="Nakagawa M."/>
            <person name="Sakamoto N."/>
            <person name="Oishi K."/>
            <person name="Kohara Y."/>
            <person name="Kobayashi M."/>
            <person name="Toyoda A."/>
            <person name="Sakaki Y."/>
            <person name="Sakurai T."/>
            <person name="Iida K."/>
            <person name="Akiyama K."/>
            <person name="Satou M."/>
            <person name="Toyoda T."/>
            <person name="Konagaya A."/>
            <person name="Carninci P."/>
            <person name="Kawai J."/>
            <person name="Hayashizaki Y."/>
            <person name="Shinozaki K."/>
        </authorList>
    </citation>
    <scope>NUCLEOTIDE SEQUENCE [LARGE SCALE MRNA]</scope>
    <source>
        <strain>cv. Columbia</strain>
    </source>
</reference>
<reference key="5">
    <citation type="submission" date="2002-03" db="EMBL/GenBank/DDBJ databases">
        <title>Full-length cDNA from Arabidopsis thaliana.</title>
        <authorList>
            <person name="Brover V.V."/>
            <person name="Troukhan M.E."/>
            <person name="Alexandrov N.A."/>
            <person name="Lu Y.-P."/>
            <person name="Flavell R.B."/>
            <person name="Feldmann K.A."/>
        </authorList>
    </citation>
    <scope>NUCLEOTIDE SEQUENCE [LARGE SCALE MRNA]</scope>
</reference>
<reference key="6">
    <citation type="journal article" date="2001" name="J. Biol. Chem.">
        <title>Phylogenetic analysis of the UDP-glycosyltransferase multigene family of Arabidopsis thaliana.</title>
        <authorList>
            <person name="Li Y."/>
            <person name="Baldauf S."/>
            <person name="Lim E.K."/>
            <person name="Bowles D.J."/>
        </authorList>
    </citation>
    <scope>GENE FAMILY</scope>
</reference>
<reference key="7">
    <citation type="journal article" date="2007" name="J. Biol. Chem.">
        <title>Identification of a flavonol 7-O-rhamnosyltransferase gene determining flavonoid pattern in Arabidopsis by transcriptome coexpression analysis and reverse genetics.</title>
        <authorList>
            <person name="Yonekura-Sakakibara K."/>
            <person name="Tohge T."/>
            <person name="Niida R."/>
            <person name="Saito K."/>
        </authorList>
    </citation>
    <scope>FUNCTION</scope>
    <scope>CATALYTIC ACTIVITY</scope>
    <scope>TISSUE SPECIFICITY</scope>
    <scope>DISRUPTION PHENOTYPE</scope>
</reference>
<reference key="8">
    <citation type="journal article" date="2013" name="Appl. Microbiol. Biotechnol.">
        <title>Regioselective synthesis of flavonoid bisglycosides using Escherichia coli harboring two glycosyltransferases.</title>
        <authorList>
            <person name="Kim H.J."/>
            <person name="Kim B.G."/>
            <person name="Ahn J.H."/>
        </authorList>
    </citation>
    <scope>FUNCTION</scope>
    <scope>CATALYTIC ACTIVITY</scope>
</reference>
<reference key="9">
    <citation type="journal article" date="2013" name="Plant Physiol. Biochem.">
        <title>The flavonoid biosynthetic pathway in Arabidopsis: Structural and genetic diversity.</title>
        <authorList>
            <person name="Saito K."/>
            <person name="Yonekura-Sakakibara K."/>
            <person name="Nakabayashi R."/>
            <person name="Higashi Y."/>
            <person name="Yamazaki M."/>
            <person name="Tohge T."/>
            <person name="Fernie A.R."/>
        </authorList>
    </citation>
    <scope>REVIEW</scope>
    <scope>NOMENCLATURE</scope>
</reference>
<reference key="10">
    <citation type="journal article" date="2014" name="New Phytol.">
        <title>Kaempferol 3-O-rhamnoside-7-O-rhamnoside is an endogenous flavonol inhibitor of polar auxin transport in Arabidopsis shoots.</title>
        <authorList>
            <person name="Yin R."/>
            <person name="Han K."/>
            <person name="Heller W."/>
            <person name="Albert A."/>
            <person name="Dobrev P.I."/>
            <person name="Zazimalova E."/>
            <person name="Schaeffner A.R."/>
        </authorList>
    </citation>
    <scope>FUNCTION</scope>
    <scope>DISRUPTION PHENOTYPE</scope>
</reference>
<reference key="11">
    <citation type="journal article" date="2015" name="Carbohydr. Res.">
        <title>Expanded acceptor substrates flexibility study of flavonol 7-O-rhamnosyltransferase, AtUGT89C1 from Arabidopsis thaliana.</title>
        <authorList>
            <person name="Parajuli P."/>
            <person name="Pandey R.P."/>
            <person name="Trang N.T.H."/>
            <person name="Oh T.J."/>
            <person name="Sohng J.K."/>
        </authorList>
    </citation>
    <scope>FUNCTION</scope>
</reference>
<reference key="12">
    <citation type="journal article" date="2016" name="J. Biol. Chem.">
        <title>7-Rhamnosylated flavonols modulate homeostasis of the plant hormone auxin and affect plant development.</title>
        <authorList>
            <person name="Kuhn B.M."/>
            <person name="Errafi S."/>
            <person name="Bucher R."/>
            <person name="Dobrev P."/>
            <person name="Geisler M."/>
            <person name="Bigler L."/>
            <person name="Zazimalova E."/>
            <person name="Ringli C."/>
        </authorList>
    </citation>
    <scope>FUNCTION</scope>
    <scope>TISSUE SPECIFICITY</scope>
    <scope>DISRUPTION PHENOTYPE</scope>
</reference>
<reference key="13">
    <citation type="journal article" date="2019" name="Plant J.">
        <title>Crystal structures of rhamnosyltransferase UGT89C1 from Arabidopsis thaliana reveal the molecular basis of sugar donor specificity for UDP-beta-l-rhamnose and rhamnosylation mechanism.</title>
        <authorList>
            <person name="Zong G."/>
            <person name="Fei S."/>
            <person name="Liu X."/>
            <person name="Li J."/>
            <person name="Gao Y."/>
            <person name="Yang X."/>
            <person name="Wang X."/>
            <person name="Shen Y."/>
        </authorList>
    </citation>
    <scope>X-RAY CRYSTALLOGRAPHY (2.70 ANGSTROMS) IN COMPLEXES WITH UDP; UDP-BETA-L-RHAMNOSE AND QUERCETIN</scope>
    <scope>FUNCTION</scope>
    <scope>CATALYTIC ACTIVITY</scope>
    <scope>BIOPHYSICOCHEMICAL PROPERTIES</scope>
    <scope>MUTAGENESIS OF GLN-18; HIS-21; LEU-88; SER-124; PRO-147; ILE-148; SER-163; TRP-335; GLY-336; GLN-354; ASP-356 AND HIS-357</scope>
</reference>
<accession>Q9LNE6</accession>
<accession>Q0WWJ0</accession>
<accession>Q8LGD9</accession>
<dbReference type="EC" id="2.4.1.-" evidence="2 3 7"/>
<dbReference type="EMBL" id="AC024174">
    <property type="protein sequence ID" value="AAF80123.1"/>
    <property type="molecule type" value="Genomic_DNA"/>
</dbReference>
<dbReference type="EMBL" id="CP002684">
    <property type="protein sequence ID" value="AEE27928.1"/>
    <property type="molecule type" value="Genomic_DNA"/>
</dbReference>
<dbReference type="EMBL" id="AY093133">
    <property type="protein sequence ID" value="AAM13132.1"/>
    <property type="molecule type" value="mRNA"/>
</dbReference>
<dbReference type="EMBL" id="BT006579">
    <property type="protein sequence ID" value="AAP31923.1"/>
    <property type="molecule type" value="mRNA"/>
</dbReference>
<dbReference type="EMBL" id="AK226360">
    <property type="protein sequence ID" value="BAE98508.1"/>
    <property type="molecule type" value="mRNA"/>
</dbReference>
<dbReference type="EMBL" id="AY084325">
    <property type="protein sequence ID" value="AAM60911.1"/>
    <property type="molecule type" value="mRNA"/>
</dbReference>
<dbReference type="PIR" id="A86195">
    <property type="entry name" value="A86195"/>
</dbReference>
<dbReference type="RefSeq" id="NP_563756.1">
    <property type="nucleotide sequence ID" value="NM_100480.3"/>
</dbReference>
<dbReference type="PDB" id="6IJ7">
    <property type="method" value="X-ray"/>
    <property type="resolution" value="2.70 A"/>
    <property type="chains" value="A/B=1-435"/>
</dbReference>
<dbReference type="PDB" id="6IJ9">
    <property type="method" value="X-ray"/>
    <property type="resolution" value="3.00 A"/>
    <property type="chains" value="A/B/C/D=1-435"/>
</dbReference>
<dbReference type="PDB" id="6IJA">
    <property type="method" value="X-ray"/>
    <property type="resolution" value="3.21 A"/>
    <property type="chains" value="A/B/C/D=1-435"/>
</dbReference>
<dbReference type="PDB" id="6IJD">
    <property type="method" value="X-ray"/>
    <property type="resolution" value="3.21 A"/>
    <property type="chains" value="A/B=1-435"/>
</dbReference>
<dbReference type="PDBsum" id="6IJ7"/>
<dbReference type="PDBsum" id="6IJ9"/>
<dbReference type="PDBsum" id="6IJA"/>
<dbReference type="PDBsum" id="6IJD"/>
<dbReference type="SMR" id="Q9LNE6"/>
<dbReference type="BioGRID" id="22351">
    <property type="interactions" value="1"/>
</dbReference>
<dbReference type="FunCoup" id="Q9LNE6">
    <property type="interactions" value="80"/>
</dbReference>
<dbReference type="STRING" id="3702.Q9LNE6"/>
<dbReference type="CAZy" id="GT1">
    <property type="family name" value="Glycosyltransferase Family 1"/>
</dbReference>
<dbReference type="PaxDb" id="3702-AT1G06000.1"/>
<dbReference type="ProteomicsDB" id="242594"/>
<dbReference type="DNASU" id="837109"/>
<dbReference type="EnsemblPlants" id="AT1G06000.1">
    <property type="protein sequence ID" value="AT1G06000.1"/>
    <property type="gene ID" value="AT1G06000"/>
</dbReference>
<dbReference type="GeneID" id="837109"/>
<dbReference type="Gramene" id="AT1G06000.1">
    <property type="protein sequence ID" value="AT1G06000.1"/>
    <property type="gene ID" value="AT1G06000"/>
</dbReference>
<dbReference type="KEGG" id="ath:AT1G06000"/>
<dbReference type="Araport" id="AT1G06000"/>
<dbReference type="TAIR" id="AT1G06000">
    <property type="gene designation" value="UGT89C1"/>
</dbReference>
<dbReference type="eggNOG" id="KOG1192">
    <property type="taxonomic scope" value="Eukaryota"/>
</dbReference>
<dbReference type="HOGENOM" id="CLU_001724_2_2_1"/>
<dbReference type="InParanoid" id="Q9LNE6"/>
<dbReference type="OMA" id="DYLACVG"/>
<dbReference type="PhylomeDB" id="Q9LNE6"/>
<dbReference type="BioCyc" id="ARA:AT1G06000-MONOMER"/>
<dbReference type="BioCyc" id="MetaCyc:MONOMER-17875"/>
<dbReference type="BRENDA" id="2.4.1.81">
    <property type="organism ID" value="399"/>
</dbReference>
<dbReference type="PRO" id="PR:Q9LNE6"/>
<dbReference type="Proteomes" id="UP000006548">
    <property type="component" value="Chromosome 1"/>
</dbReference>
<dbReference type="ExpressionAtlas" id="Q9LNE6">
    <property type="expression patterns" value="baseline and differential"/>
</dbReference>
<dbReference type="GO" id="GO:0005829">
    <property type="term" value="C:cytosol"/>
    <property type="evidence" value="ECO:0007005"/>
    <property type="project" value="TAIR"/>
</dbReference>
<dbReference type="GO" id="GO:0005576">
    <property type="term" value="C:extracellular region"/>
    <property type="evidence" value="ECO:0007005"/>
    <property type="project" value="TAIR"/>
</dbReference>
<dbReference type="GO" id="GO:0008194">
    <property type="term" value="F:UDP-glycosyltransferase activity"/>
    <property type="evidence" value="ECO:0000314"/>
    <property type="project" value="TAIR"/>
</dbReference>
<dbReference type="GO" id="GO:0051555">
    <property type="term" value="P:flavonol biosynthetic process"/>
    <property type="evidence" value="ECO:0000314"/>
    <property type="project" value="TAIR"/>
</dbReference>
<dbReference type="CDD" id="cd03784">
    <property type="entry name" value="GT1_Gtf-like"/>
    <property type="match status" value="1"/>
</dbReference>
<dbReference type="FunFam" id="3.40.50.2000:FF:000060">
    <property type="entry name" value="Glycosyltransferase"/>
    <property type="match status" value="1"/>
</dbReference>
<dbReference type="Gene3D" id="3.40.50.2000">
    <property type="entry name" value="Glycogen Phosphorylase B"/>
    <property type="match status" value="2"/>
</dbReference>
<dbReference type="InterPro" id="IPR002213">
    <property type="entry name" value="UDP_glucos_trans"/>
</dbReference>
<dbReference type="PANTHER" id="PTHR48047:SF5">
    <property type="entry name" value="FLAVONOL 7-O-RHAMNOSYLTRANSFERASE"/>
    <property type="match status" value="1"/>
</dbReference>
<dbReference type="PANTHER" id="PTHR48047">
    <property type="entry name" value="GLYCOSYLTRANSFERASE"/>
    <property type="match status" value="1"/>
</dbReference>
<dbReference type="Pfam" id="PF00201">
    <property type="entry name" value="UDPGT"/>
    <property type="match status" value="1"/>
</dbReference>
<dbReference type="SUPFAM" id="SSF53756">
    <property type="entry name" value="UDP-Glycosyltransferase/glycogen phosphorylase"/>
    <property type="match status" value="1"/>
</dbReference>
<gene>
    <name evidence="8" type="primary">UGT89C1</name>
    <name evidence="10" type="ordered locus">At1g06000</name>
    <name evidence="11" type="ORF">T21E18.5</name>
</gene>
<comment type="function">
    <text evidence="2 3 4 5 6 7">Flavonol 7-O-rhamnosyltransferase that catalyzes the transfer of rhamnose from UDP-rhamnose to the 7-OH position of 3-O-glycosylated flavonols, such as kaempferol 3-O-rhamnoside, kaempferol 3-O-glucoside, quercetin 3-O-glucoside, quercetin 3-O-galactoside, quercetin 3-O-rhamnoside and isorhamnetin 3-O-glucoside (PubMed:17314094, PubMed:23549747, PubMed:24251900, PubMed:30893500). Is able to glycosylate the flavonols quercetin and kaempferol to yield quercetin 7-O-rhamnoside and kaempferol 7-O-rhamnoside (PubMed:17314094, PubMed:26513760, PubMed:30893500). Shows a strict specificity for UDP-rhamnose as sugar donor (PubMed:17314094, PubMed:30893500). Does not act on 3-O-glycosylated anthocyanins (PubMed:17314094). The accumulation of kaempferol 3-O-rhamnoside-7-O-rhamnoside inhibits basipetal auxin transport, which influences auxin distribution and plant organ development (PubMed:24251900, PubMed:26742840).</text>
</comment>
<comment type="catalytic activity">
    <reaction evidence="2 3 7">
        <text>quercitrin + UDP-beta-L-rhamnose = quercetin 3,7-bis-O-alpha-L-rhamnoside + UDP + H(+)</text>
        <dbReference type="Rhea" id="RHEA:61184"/>
        <dbReference type="ChEBI" id="CHEBI:15378"/>
        <dbReference type="ChEBI" id="CHEBI:58192"/>
        <dbReference type="ChEBI" id="CHEBI:58223"/>
        <dbReference type="ChEBI" id="CHEBI:83836"/>
        <dbReference type="ChEBI" id="CHEBI:144435"/>
    </reaction>
    <physiologicalReaction direction="left-to-right" evidence="2 3 7">
        <dbReference type="Rhea" id="RHEA:61185"/>
    </physiologicalReaction>
</comment>
<comment type="catalytic activity">
    <reaction evidence="2 3 7">
        <text>quercetin 3-O-beta-D-glucoside + UDP-beta-L-rhamnose = quercetin 3-O-beta-D-glucoside-7-O-alpha-L-rhamnoside + UDP + H(+)</text>
        <dbReference type="Rhea" id="RHEA:61188"/>
        <dbReference type="ChEBI" id="CHEBI:15378"/>
        <dbReference type="ChEBI" id="CHEBI:58223"/>
        <dbReference type="ChEBI" id="CHEBI:83836"/>
        <dbReference type="ChEBI" id="CHEBI:144436"/>
        <dbReference type="ChEBI" id="CHEBI:144437"/>
    </reaction>
    <physiologicalReaction direction="left-to-right" evidence="2 3 7">
        <dbReference type="Rhea" id="RHEA:61189"/>
    </physiologicalReaction>
</comment>
<comment type="biophysicochemical properties">
    <kinetics>
        <KM evidence="7">5.4 uM for quercetin</KM>
        <KM evidence="7">14.1 uM for kaempferol</KM>
        <KM evidence="7">546.9 uM for UDP-rhamnose</KM>
    </kinetics>
</comment>
<comment type="pathway">
    <text evidence="9">Flavonoid metabolism.</text>
</comment>
<comment type="tissue specificity">
    <text evidence="2 6">Highly expressed in floral buds (PubMed:17314094). Expressed in stems, leaves and flowers (PubMed:17314094). Expressed at low levels in roots and siliques (PubMed:17314094). Expressed on the adaxial side of cotyledons and emerging leaves, in trichomes, root columella cells, and the late elongation/early differentiation zone of roots (PubMed:26742840).</text>
</comment>
<comment type="disruption phenotype">
    <text evidence="2 4 6">No visible phenotype under normal growth conditions, but mutant plants do not accumulate 7-O-rhamnosylated flavonols (PubMed:17314094, PubMed:24251900, PubMed:26742840). Increased concentrations of auxin precursors and auxin metabolites (PubMed:26742840).</text>
</comment>
<comment type="similarity">
    <text evidence="9">Belongs to the UDP-glycosyltransferase family.</text>
</comment>
<protein>
    <recommendedName>
        <fullName evidence="9">Flavonol 7-O-rhamnosyltransferase</fullName>
        <ecNumber evidence="2 3 7">2.4.1.-</ecNumber>
    </recommendedName>
    <alternativeName>
        <fullName evidence="9">UDP-glycosyltransferase 89C1</fullName>
    </alternativeName>
    <alternativeName>
        <fullName evidence="9">UDP-rhamnose: flavonol 7-O-rhamnosyltransferase</fullName>
    </alternativeName>
</protein>
<evidence type="ECO:0000250" key="1">
    <source>
        <dbReference type="UniProtKB" id="A0A0A1HA03"/>
    </source>
</evidence>
<evidence type="ECO:0000269" key="2">
    <source>
    </source>
</evidence>
<evidence type="ECO:0000269" key="3">
    <source>
    </source>
</evidence>
<evidence type="ECO:0000269" key="4">
    <source>
    </source>
</evidence>
<evidence type="ECO:0000269" key="5">
    <source>
    </source>
</evidence>
<evidence type="ECO:0000269" key="6">
    <source>
    </source>
</evidence>
<evidence type="ECO:0000269" key="7">
    <source>
    </source>
</evidence>
<evidence type="ECO:0000303" key="8">
    <source>
    </source>
</evidence>
<evidence type="ECO:0000305" key="9"/>
<evidence type="ECO:0000312" key="10">
    <source>
        <dbReference type="Araport" id="AT1G06000"/>
    </source>
</evidence>
<evidence type="ECO:0000312" key="11">
    <source>
        <dbReference type="EMBL" id="AAF80123.1"/>
    </source>
</evidence>
<evidence type="ECO:0007744" key="12">
    <source>
        <dbReference type="PDB" id="6IJ9"/>
    </source>
</evidence>
<evidence type="ECO:0007744" key="13">
    <source>
        <dbReference type="PDB" id="6IJA"/>
    </source>
</evidence>
<evidence type="ECO:0007744" key="14">
    <source>
        <dbReference type="PDB" id="6IJD"/>
    </source>
</evidence>
<evidence type="ECO:0007829" key="15">
    <source>
        <dbReference type="PDB" id="6IJ7"/>
    </source>
</evidence>
<evidence type="ECO:0007829" key="16">
    <source>
        <dbReference type="PDB" id="6IJ9"/>
    </source>
</evidence>
<evidence type="ECO:0007829" key="17">
    <source>
        <dbReference type="PDB" id="6IJA"/>
    </source>
</evidence>
<name>U89C1_ARATH</name>
<sequence length="435" mass="48122">MTTTTTKKPHVLVIPFPQSGHMVPHLDLTHQILLRGATVTVLVTPKNSSYLDALRSLHSPEHFKTLILPFPSHPCIPSGVESLQQLPLEAIVHMFDALSRLHDPLVDFLSRQPPSDLPDAILGSSFLSPWINKVADAFSIKSISFLPINAHSISVMWAQEDRSFFNDLETATTESYGLVINSFYDLEPEFVETVKTRFLNHHRIWTVGPLLPFKAGVDRGGQSSIPPAKVSAWLDSCPEDNSVVYVGFGSQIRLTAEQTAALAAALEKSSVRFIWAVRDAAKKVNSSDNSVEEDVIPAGFEERVKEKGLVIRGWAPQTMILEHRAVGSYLTHLGWGSVLEGMVGGVMLLAWPMQADHFFNTTLIVDKLRAAVRVGENRDSVPDSDKLARILAESAREDLPERVTLMKLREKAMEAIKEGGSSYKNLDELVAEMCL</sequence>
<proteinExistence type="evidence at protein level"/>